<protein>
    <recommendedName>
        <fullName>Ubiquinol-cytochrome-c reductase complex assembly factor 2</fullName>
    </recommendedName>
    <alternativeName>
        <fullName>Mitochondrial nucleoid factor 1</fullName>
    </alternativeName>
    <alternativeName>
        <fullName>Mitochondrial protein M19</fullName>
    </alternativeName>
</protein>
<keyword id="KW-0496">Mitochondrion</keyword>
<keyword id="KW-1135">Mitochondrion nucleoid</keyword>
<keyword id="KW-1185">Reference proteome</keyword>
<keyword id="KW-0809">Transit peptide</keyword>
<accession>Q6PBU7</accession>
<proteinExistence type="evidence at transcript level"/>
<reference key="1">
    <citation type="journal article" date="2013" name="Nature">
        <title>The zebrafish reference genome sequence and its relationship to the human genome.</title>
        <authorList>
            <person name="Howe K."/>
            <person name="Clark M.D."/>
            <person name="Torroja C.F."/>
            <person name="Torrance J."/>
            <person name="Berthelot C."/>
            <person name="Muffato M."/>
            <person name="Collins J.E."/>
            <person name="Humphray S."/>
            <person name="McLaren K."/>
            <person name="Matthews L."/>
            <person name="McLaren S."/>
            <person name="Sealy I."/>
            <person name="Caccamo M."/>
            <person name="Churcher C."/>
            <person name="Scott C."/>
            <person name="Barrett J.C."/>
            <person name="Koch R."/>
            <person name="Rauch G.J."/>
            <person name="White S."/>
            <person name="Chow W."/>
            <person name="Kilian B."/>
            <person name="Quintais L.T."/>
            <person name="Guerra-Assuncao J.A."/>
            <person name="Zhou Y."/>
            <person name="Gu Y."/>
            <person name="Yen J."/>
            <person name="Vogel J.H."/>
            <person name="Eyre T."/>
            <person name="Redmond S."/>
            <person name="Banerjee R."/>
            <person name="Chi J."/>
            <person name="Fu B."/>
            <person name="Langley E."/>
            <person name="Maguire S.F."/>
            <person name="Laird G.K."/>
            <person name="Lloyd D."/>
            <person name="Kenyon E."/>
            <person name="Donaldson S."/>
            <person name="Sehra H."/>
            <person name="Almeida-King J."/>
            <person name="Loveland J."/>
            <person name="Trevanion S."/>
            <person name="Jones M."/>
            <person name="Quail M."/>
            <person name="Willey D."/>
            <person name="Hunt A."/>
            <person name="Burton J."/>
            <person name="Sims S."/>
            <person name="McLay K."/>
            <person name="Plumb B."/>
            <person name="Davis J."/>
            <person name="Clee C."/>
            <person name="Oliver K."/>
            <person name="Clark R."/>
            <person name="Riddle C."/>
            <person name="Elliot D."/>
            <person name="Threadgold G."/>
            <person name="Harden G."/>
            <person name="Ware D."/>
            <person name="Begum S."/>
            <person name="Mortimore B."/>
            <person name="Kerry G."/>
            <person name="Heath P."/>
            <person name="Phillimore B."/>
            <person name="Tracey A."/>
            <person name="Corby N."/>
            <person name="Dunn M."/>
            <person name="Johnson C."/>
            <person name="Wood J."/>
            <person name="Clark S."/>
            <person name="Pelan S."/>
            <person name="Griffiths G."/>
            <person name="Smith M."/>
            <person name="Glithero R."/>
            <person name="Howden P."/>
            <person name="Barker N."/>
            <person name="Lloyd C."/>
            <person name="Stevens C."/>
            <person name="Harley J."/>
            <person name="Holt K."/>
            <person name="Panagiotidis G."/>
            <person name="Lovell J."/>
            <person name="Beasley H."/>
            <person name="Henderson C."/>
            <person name="Gordon D."/>
            <person name="Auger K."/>
            <person name="Wright D."/>
            <person name="Collins J."/>
            <person name="Raisen C."/>
            <person name="Dyer L."/>
            <person name="Leung K."/>
            <person name="Robertson L."/>
            <person name="Ambridge K."/>
            <person name="Leongamornlert D."/>
            <person name="McGuire S."/>
            <person name="Gilderthorp R."/>
            <person name="Griffiths C."/>
            <person name="Manthravadi D."/>
            <person name="Nichol S."/>
            <person name="Barker G."/>
            <person name="Whitehead S."/>
            <person name="Kay M."/>
            <person name="Brown J."/>
            <person name="Murnane C."/>
            <person name="Gray E."/>
            <person name="Humphries M."/>
            <person name="Sycamore N."/>
            <person name="Barker D."/>
            <person name="Saunders D."/>
            <person name="Wallis J."/>
            <person name="Babbage A."/>
            <person name="Hammond S."/>
            <person name="Mashreghi-Mohammadi M."/>
            <person name="Barr L."/>
            <person name="Martin S."/>
            <person name="Wray P."/>
            <person name="Ellington A."/>
            <person name="Matthews N."/>
            <person name="Ellwood M."/>
            <person name="Woodmansey R."/>
            <person name="Clark G."/>
            <person name="Cooper J."/>
            <person name="Tromans A."/>
            <person name="Grafham D."/>
            <person name="Skuce C."/>
            <person name="Pandian R."/>
            <person name="Andrews R."/>
            <person name="Harrison E."/>
            <person name="Kimberley A."/>
            <person name="Garnett J."/>
            <person name="Fosker N."/>
            <person name="Hall R."/>
            <person name="Garner P."/>
            <person name="Kelly D."/>
            <person name="Bird C."/>
            <person name="Palmer S."/>
            <person name="Gehring I."/>
            <person name="Berger A."/>
            <person name="Dooley C.M."/>
            <person name="Ersan-Urun Z."/>
            <person name="Eser C."/>
            <person name="Geiger H."/>
            <person name="Geisler M."/>
            <person name="Karotki L."/>
            <person name="Kirn A."/>
            <person name="Konantz J."/>
            <person name="Konantz M."/>
            <person name="Oberlander M."/>
            <person name="Rudolph-Geiger S."/>
            <person name="Teucke M."/>
            <person name="Lanz C."/>
            <person name="Raddatz G."/>
            <person name="Osoegawa K."/>
            <person name="Zhu B."/>
            <person name="Rapp A."/>
            <person name="Widaa S."/>
            <person name="Langford C."/>
            <person name="Yang F."/>
            <person name="Schuster S.C."/>
            <person name="Carter N.P."/>
            <person name="Harrow J."/>
            <person name="Ning Z."/>
            <person name="Herrero J."/>
            <person name="Searle S.M."/>
            <person name="Enright A."/>
            <person name="Geisler R."/>
            <person name="Plasterk R.H."/>
            <person name="Lee C."/>
            <person name="Westerfield M."/>
            <person name="de Jong P.J."/>
            <person name="Zon L.I."/>
            <person name="Postlethwait J.H."/>
            <person name="Nusslein-Volhard C."/>
            <person name="Hubbard T.J."/>
            <person name="Roest Crollius H."/>
            <person name="Rogers J."/>
            <person name="Stemple D.L."/>
        </authorList>
    </citation>
    <scope>NUCLEOTIDE SEQUENCE [LARGE SCALE GENOMIC DNA]</scope>
    <source>
        <strain>Tuebingen</strain>
    </source>
</reference>
<reference key="2">
    <citation type="submission" date="2003-10" db="EMBL/GenBank/DDBJ databases">
        <authorList>
            <consortium name="NIH - Zebrafish Gene Collection (ZGC) project"/>
        </authorList>
    </citation>
    <scope>NUCLEOTIDE SEQUENCE [LARGE SCALE MRNA]</scope>
    <source>
        <tissue>Retina</tissue>
    </source>
</reference>
<comment type="function">
    <text evidence="2 3">Required for the assembly of the ubiquinol-cytochrome c reductase complex (mitochondrial respiratory chain complex III or cytochrome b-c1 complex). May play a role in the modulation of respiratory chain activities such as oxygen consumption and ATP production. May be involved in cytochrome b translation and/or stability.</text>
</comment>
<comment type="subcellular location">
    <subcellularLocation>
        <location evidence="1">Mitochondrion matrix</location>
        <location evidence="1">Mitochondrion nucleoid</location>
    </subcellularLocation>
    <subcellularLocation>
        <location evidence="1">Mitochondrion</location>
    </subcellularLocation>
</comment>
<organism>
    <name type="scientific">Danio rerio</name>
    <name type="common">Zebrafish</name>
    <name type="synonym">Brachydanio rerio</name>
    <dbReference type="NCBI Taxonomy" id="7955"/>
    <lineage>
        <taxon>Eukaryota</taxon>
        <taxon>Metazoa</taxon>
        <taxon>Chordata</taxon>
        <taxon>Craniata</taxon>
        <taxon>Vertebrata</taxon>
        <taxon>Euteleostomi</taxon>
        <taxon>Actinopterygii</taxon>
        <taxon>Neopterygii</taxon>
        <taxon>Teleostei</taxon>
        <taxon>Ostariophysi</taxon>
        <taxon>Cypriniformes</taxon>
        <taxon>Danionidae</taxon>
        <taxon>Danioninae</taxon>
        <taxon>Danio</taxon>
    </lineage>
</organism>
<evidence type="ECO:0000250" key="1"/>
<evidence type="ECO:0000250" key="2">
    <source>
        <dbReference type="UniProtKB" id="Q9BRT2"/>
    </source>
</evidence>
<evidence type="ECO:0000250" key="3">
    <source>
        <dbReference type="UniProtKB" id="Q9CQY6"/>
    </source>
</evidence>
<feature type="transit peptide" description="Mitochondrion" evidence="1">
    <location>
        <begin position="1"/>
        <end position="13"/>
    </location>
</feature>
<feature type="chain" id="PRO_0000416463" description="Ubiquinol-cytochrome-c reductase complex assembly factor 2">
    <location>
        <begin position="14"/>
        <end position="129"/>
    </location>
</feature>
<sequence>MSATRYRRFLKLCEEWPKDESKKGRDLGTFLRQRVASAFREGENTQISDPEKCDQMYESLARINSNVYKEKFPRAKDTSFTGVTVEECRLLLATGSMQQTDEEKKGLWKTLMERFSSKPEDVPPEKAEK</sequence>
<gene>
    <name type="primary">uqcc2</name>
    <name type="synonym">mnf1</name>
    <name type="ORF">zgc:73238</name>
</gene>
<name>UQCC2_DANRE</name>
<dbReference type="EMBL" id="CU463231">
    <property type="status" value="NOT_ANNOTATED_CDS"/>
    <property type="molecule type" value="Genomic_DNA"/>
</dbReference>
<dbReference type="EMBL" id="BC059579">
    <property type="protein sequence ID" value="AAH59579.1"/>
    <property type="molecule type" value="mRNA"/>
</dbReference>
<dbReference type="RefSeq" id="NP_957052.1">
    <property type="nucleotide sequence ID" value="NM_200758.2"/>
</dbReference>
<dbReference type="FunCoup" id="Q6PBU7">
    <property type="interactions" value="849"/>
</dbReference>
<dbReference type="STRING" id="7955.ENSDARP00000005533"/>
<dbReference type="PaxDb" id="7955-ENSDARP00000005533"/>
<dbReference type="Ensembl" id="ENSDART00000004075">
    <property type="protein sequence ID" value="ENSDARP00000005533"/>
    <property type="gene ID" value="ENSDARG00000011272"/>
</dbReference>
<dbReference type="GeneID" id="393731"/>
<dbReference type="KEGG" id="dre:393731"/>
<dbReference type="AGR" id="ZFIN:ZDB-GENE-040426-1726"/>
<dbReference type="CTD" id="84300"/>
<dbReference type="ZFIN" id="ZDB-GENE-040426-1726">
    <property type="gene designation" value="uqcc2"/>
</dbReference>
<dbReference type="eggNOG" id="ENOG502S2M4">
    <property type="taxonomic scope" value="Eukaryota"/>
</dbReference>
<dbReference type="HOGENOM" id="CLU_162766_0_0_1"/>
<dbReference type="InParanoid" id="Q6PBU7"/>
<dbReference type="OMA" id="CEEWPKD"/>
<dbReference type="OrthoDB" id="6266314at2759"/>
<dbReference type="PhylomeDB" id="Q6PBU7"/>
<dbReference type="TreeFam" id="TF333267"/>
<dbReference type="PRO" id="PR:Q6PBU7"/>
<dbReference type="Proteomes" id="UP000000437">
    <property type="component" value="Chromosome 6"/>
</dbReference>
<dbReference type="Bgee" id="ENSDARG00000011272">
    <property type="expression patterns" value="Expressed in muscle tissue and 33 other cell types or tissues"/>
</dbReference>
<dbReference type="GO" id="GO:0005743">
    <property type="term" value="C:mitochondrial inner membrane"/>
    <property type="evidence" value="ECO:0000250"/>
    <property type="project" value="UniProtKB"/>
</dbReference>
<dbReference type="GO" id="GO:0005758">
    <property type="term" value="C:mitochondrial intermembrane space"/>
    <property type="evidence" value="ECO:0000250"/>
    <property type="project" value="UniProtKB"/>
</dbReference>
<dbReference type="GO" id="GO:0005759">
    <property type="term" value="C:mitochondrial matrix"/>
    <property type="evidence" value="ECO:0000250"/>
    <property type="project" value="UniProtKB"/>
</dbReference>
<dbReference type="GO" id="GO:0042645">
    <property type="term" value="C:mitochondrial nucleoid"/>
    <property type="evidence" value="ECO:0000250"/>
    <property type="project" value="UniProtKB"/>
</dbReference>
<dbReference type="GO" id="GO:0005739">
    <property type="term" value="C:mitochondrion"/>
    <property type="evidence" value="ECO:0000250"/>
    <property type="project" value="UniProtKB"/>
</dbReference>
<dbReference type="GO" id="GO:0034551">
    <property type="term" value="P:mitochondrial respiratory chain complex III assembly"/>
    <property type="evidence" value="ECO:0000250"/>
    <property type="project" value="UniProtKB"/>
</dbReference>
<dbReference type="GO" id="GO:0070131">
    <property type="term" value="P:positive regulation of mitochondrial translation"/>
    <property type="evidence" value="ECO:0000250"/>
    <property type="project" value="UniProtKB"/>
</dbReference>
<dbReference type="GO" id="GO:0050796">
    <property type="term" value="P:regulation of insulin secretion"/>
    <property type="evidence" value="ECO:0000250"/>
    <property type="project" value="UniProtKB"/>
</dbReference>
<dbReference type="GO" id="GO:0002082">
    <property type="term" value="P:regulation of oxidative phosphorylation"/>
    <property type="evidence" value="ECO:0000250"/>
    <property type="project" value="UniProtKB"/>
</dbReference>
<dbReference type="GO" id="GO:2001014">
    <property type="term" value="P:regulation of skeletal muscle cell differentiation"/>
    <property type="evidence" value="ECO:0000250"/>
    <property type="project" value="UniProtKB"/>
</dbReference>
<dbReference type="InterPro" id="IPR037698">
    <property type="entry name" value="UQCC2"/>
</dbReference>
<dbReference type="PANTHER" id="PTHR34260">
    <property type="entry name" value="UBIQUINOL-CYTOCHROME-C REDUCTASE COMPLEX ASSEMBLY FACTOR 2"/>
    <property type="match status" value="1"/>
</dbReference>
<dbReference type="PANTHER" id="PTHR34260:SF1">
    <property type="entry name" value="UBIQUINOL-CYTOCHROME-C REDUCTASE COMPLEX ASSEMBLY FACTOR 2"/>
    <property type="match status" value="1"/>
</dbReference>
<dbReference type="Pfam" id="PF20180">
    <property type="entry name" value="UQCC2_CBP6"/>
    <property type="match status" value="1"/>
</dbReference>